<gene>
    <name type="primary">hmw3</name>
    <name type="ordered locus">MPN_452</name>
    <name type="ORF">MP389</name>
</gene>
<organism>
    <name type="scientific">Mycoplasma pneumoniae (strain ATCC 29342 / M129 / Subtype 1)</name>
    <name type="common">Mycoplasmoides pneumoniae</name>
    <dbReference type="NCBI Taxonomy" id="272634"/>
    <lineage>
        <taxon>Bacteria</taxon>
        <taxon>Bacillati</taxon>
        <taxon>Mycoplasmatota</taxon>
        <taxon>Mycoplasmoidales</taxon>
        <taxon>Mycoplasmoidaceae</taxon>
        <taxon>Mycoplasmoides</taxon>
    </lineage>
</organism>
<protein>
    <recommendedName>
        <fullName>Cytadherence high molecular weight protein 3</fullName>
    </recommendedName>
    <alternativeName>
        <fullName>Accessory adhesin protein 3</fullName>
    </alternativeName>
    <alternativeName>
        <fullName>Cytadherence accessory protein 3</fullName>
    </alternativeName>
</protein>
<evidence type="ECO:0000256" key="1">
    <source>
        <dbReference type="SAM" id="MobiDB-lite"/>
    </source>
</evidence>
<evidence type="ECO:0000305" key="2"/>
<reference key="1">
    <citation type="journal article" date="1992" name="Infect. Immun.">
        <title>Nucleotide sequence analysis reveals novel features of the phase-variable cytadherence accessory protein HMW3 of Mycoplasma pneumoniae.</title>
        <authorList>
            <person name="Ogle K.F."/>
            <person name="Lee K.K."/>
            <person name="Krause D.C."/>
        </authorList>
    </citation>
    <scope>NUCLEOTIDE SEQUENCE [GENOMIC DNA]</scope>
    <scope>PROTEIN SEQUENCE OF 1-29</scope>
    <source>
        <strain>ATCC 29342 / M129-B17</strain>
    </source>
</reference>
<reference key="2">
    <citation type="journal article" date="1996" name="Nucleic Acids Res.">
        <title>Complete sequence analysis of the genome of the bacterium Mycoplasma pneumoniae.</title>
        <authorList>
            <person name="Himmelreich R."/>
            <person name="Hilbert H."/>
            <person name="Plagens H."/>
            <person name="Pirkl E."/>
            <person name="Li B.-C."/>
            <person name="Herrmann R."/>
        </authorList>
    </citation>
    <scope>NUCLEOTIDE SEQUENCE [LARGE SCALE GENOMIC DNA]</scope>
    <source>
        <strain>ATCC 29342 / M129 / Subtype 1</strain>
    </source>
</reference>
<reference key="3">
    <citation type="journal article" date="1991" name="Gene">
        <title>Cloning and analysis of the gene encoding the cytadherence phase-variable protein HMW3 from Mycoplasma pneumoniae.</title>
        <authorList>
            <person name="Ogle K.F."/>
            <person name="Lee K.K."/>
            <person name="Krause D.C."/>
        </authorList>
    </citation>
    <scope>PROTEIN SEQUENCE OF 279-290</scope>
    <source>
        <strain>ATCC 29342 / M129-B17</strain>
    </source>
</reference>
<comment type="function">
    <text>Component of the cytoskeleton-like structure which stabilizes the shape of the wall-less mycoplasma. This cytoskeleton-like network of accessory proteins containing HMW proteins 1 to 5 allows the proper anchoring of cytadhesin proteins in the mycoplasmal membrane at the attachment organelle. Essential for successful surface parasitism.</text>
</comment>
<comment type="subcellular location">
    <subcellularLocation>
        <location>Cell projection</location>
        <location>Attachment organelle membrane</location>
    </subcellularLocation>
    <text>Localizes specifically to the attachment membrane.</text>
</comment>
<name>HMW3_MYCPN</name>
<dbReference type="EMBL" id="L38997">
    <property type="protein sequence ID" value="AAA61692.1"/>
    <property type="molecule type" value="Genomic_DNA"/>
</dbReference>
<dbReference type="EMBL" id="U00089">
    <property type="protein sequence ID" value="AAB96037.1"/>
    <property type="molecule type" value="Genomic_DNA"/>
</dbReference>
<dbReference type="PIR" id="S73715">
    <property type="entry name" value="S73715"/>
</dbReference>
<dbReference type="RefSeq" id="NP_110140.1">
    <property type="nucleotide sequence ID" value="NC_000912.1"/>
</dbReference>
<dbReference type="RefSeq" id="WP_010874808.1">
    <property type="nucleotide sequence ID" value="NC_000912.1"/>
</dbReference>
<dbReference type="IntAct" id="Q50360">
    <property type="interactions" value="3"/>
</dbReference>
<dbReference type="STRING" id="272634.MPN_452"/>
<dbReference type="EnsemblBacteria" id="AAB96037">
    <property type="protein sequence ID" value="AAB96037"/>
    <property type="gene ID" value="MPN_452"/>
</dbReference>
<dbReference type="KEGG" id="mpn:MPN_452"/>
<dbReference type="PATRIC" id="fig|272634.6.peg.488"/>
<dbReference type="HOGENOM" id="CLU_455483_0_0_14"/>
<dbReference type="OrthoDB" id="10017470at2"/>
<dbReference type="BioCyc" id="MPNE272634:G1GJ3-732-MONOMER"/>
<dbReference type="Proteomes" id="UP000000808">
    <property type="component" value="Chromosome"/>
</dbReference>
<dbReference type="GO" id="GO:0033111">
    <property type="term" value="C:attachment organelle membrane"/>
    <property type="evidence" value="ECO:0007669"/>
    <property type="project" value="UniProtKB-SubCell"/>
</dbReference>
<dbReference type="GO" id="GO:0042995">
    <property type="term" value="C:cell projection"/>
    <property type="evidence" value="ECO:0007669"/>
    <property type="project" value="UniProtKB-KW"/>
</dbReference>
<dbReference type="GO" id="GO:0005886">
    <property type="term" value="C:plasma membrane"/>
    <property type="evidence" value="ECO:0007669"/>
    <property type="project" value="UniProtKB-KW"/>
</dbReference>
<dbReference type="GO" id="GO:0020035">
    <property type="term" value="P:adhesion of symbiont to microvasculature"/>
    <property type="evidence" value="ECO:0007669"/>
    <property type="project" value="UniProtKB-KW"/>
</dbReference>
<sequence>MTDKERAKLAKAYGKLAQKIQKSYPDINVVYGRDAKNKLHALYQDPETGNIFSLEKRKQLPADYPLFELDSDEPISFAPKIIPLTAFDGNNNEVIVQYDQVNNTFYDQDGNVLDVSGYRDGENIPLVDYLNYGGSTASADTTTSEPLSGEGYPDIDAGLPVVDPDATPEQQADQLFGLDPLPQAPDEYQDTTAPPAYDQTFDQATYDQQAYDQNYDPNAYYDQQAYDQSFDQQAYDQAYDANAYNTQNYDQAHDPNAYYDSQAYSDPDQASAVAPIEVAPLQPEPVAPVVEPTAVPIVESAPIVEVTPTVEPTPTPVVETAPVVEAPKVVEPTPTPVVEATPAPKVEPKVVEQPQPTPVTVEVDSPKVEIPKVVTAKVALQVAQPTPVPAVPKVAPQPTPAPVVVQPTAVVQPVVKAEPKVVTPTPAPQVVVTPQVATPKVTPKVVQTTPAVPPVVVQPEVVVQPIIRPTQPEPEWKPSPASVVEPQPCQSACVNNESGAITIHTTNRSLLLEKLASLGHLHDASTRTPLPHERYQLAPPSEYVATKYNEPLFNLPAIRNSWARFTRPTVESTPIASRFTGVTPMAVNYRNPASLNFDSLNSFGAYRSPSSFYPLRRPLELSSLRRNRSSFFNTHRFDLGSNYTSFTPRYRSPLRGGLSQRFPLRSSWSKEF</sequence>
<keyword id="KW-1003">Cell membrane</keyword>
<keyword id="KW-0966">Cell projection</keyword>
<keyword id="KW-0200">Cytadherence</keyword>
<keyword id="KW-0903">Direct protein sequencing</keyword>
<keyword id="KW-0472">Membrane</keyword>
<keyword id="KW-1185">Reference proteome</keyword>
<keyword id="KW-0677">Repeat</keyword>
<keyword id="KW-0843">Virulence</keyword>
<accession>Q50360</accession>
<proteinExistence type="evidence at protein level"/>
<feature type="chain" id="PRO_0000084016" description="Cytadherence high molecular weight protein 3">
    <location>
        <begin position="1"/>
        <end position="672"/>
    </location>
</feature>
<feature type="repeat" description="1-1">
    <location>
        <begin position="98"/>
        <end position="100"/>
    </location>
</feature>
<feature type="repeat" description="1-2">
    <location>
        <begin position="106"/>
        <end position="108"/>
    </location>
</feature>
<feature type="repeat" description="2-1">
    <location>
        <begin position="160"/>
        <end position="162"/>
    </location>
</feature>
<feature type="repeat" description="1-3">
    <location>
        <begin position="197"/>
        <end position="199"/>
    </location>
</feature>
<feature type="repeat" description="1-4">
    <location>
        <begin position="206"/>
        <end position="208"/>
    </location>
</feature>
<feature type="repeat" description="1-5">
    <location>
        <begin position="211"/>
        <end position="213"/>
    </location>
</feature>
<feature type="repeat" description="1-6">
    <location>
        <begin position="221"/>
        <end position="223"/>
    </location>
</feature>
<feature type="repeat" description="1-7">
    <location>
        <begin position="226"/>
        <end position="228"/>
    </location>
</feature>
<feature type="repeat" description="1-8">
    <location>
        <begin position="235"/>
        <end position="237"/>
    </location>
</feature>
<feature type="repeat" description="1-9">
    <location>
        <begin position="249"/>
        <end position="251"/>
    </location>
</feature>
<feature type="repeat" description="2-2">
    <location>
        <begin position="288"/>
        <end position="290"/>
    </location>
</feature>
<feature type="repeat" description="3-1">
    <location>
        <begin position="310"/>
        <end position="319"/>
    </location>
</feature>
<feature type="repeat" description="4-1">
    <location>
        <begin position="312"/>
        <end position="315"/>
    </location>
</feature>
<feature type="repeat" description="2-3">
    <location>
        <begin position="316"/>
        <end position="318"/>
    </location>
</feature>
<feature type="repeat" description="2-4">
    <location>
        <begin position="322"/>
        <end position="324"/>
    </location>
</feature>
<feature type="repeat" description="3-2">
    <location>
        <begin position="330"/>
        <end position="339"/>
    </location>
</feature>
<feature type="repeat" description="4-2">
    <location>
        <begin position="332"/>
        <end position="335"/>
    </location>
</feature>
<feature type="repeat" description="2-5">
    <location>
        <begin position="336"/>
        <end position="338"/>
    </location>
</feature>
<feature type="repeat" description="4-3">
    <location>
        <begin position="354"/>
        <end position="358"/>
    </location>
</feature>
<feature type="repeat" description="4-4">
    <location>
        <begin position="385"/>
        <end position="389"/>
    </location>
</feature>
<feature type="repeat" description="4-5">
    <location>
        <begin position="396"/>
        <end position="400"/>
    </location>
</feature>
<feature type="repeat" description="2-6">
    <location>
        <begin position="402"/>
        <end position="404"/>
    </location>
</feature>
<feature type="repeat" description="2-7">
    <location>
        <begin position="413"/>
        <end position="415"/>
    </location>
</feature>
<feature type="repeat" description="4-6">
    <location>
        <begin position="424"/>
        <end position="428"/>
    </location>
</feature>
<feature type="repeat" description="2-8">
    <location>
        <begin position="454"/>
        <end position="456"/>
    </location>
</feature>
<feature type="region of interest" description="9 X 3 AA repeats OF Y-D-Q">
    <location>
        <begin position="98"/>
        <end position="251"/>
    </location>
</feature>
<feature type="region of interest" description="8 X 3 AA repeats of P-V-V">
    <location>
        <begin position="160"/>
        <end position="456"/>
    </location>
</feature>
<feature type="region of interest" description="Disordered" evidence="1">
    <location>
        <begin position="177"/>
        <end position="197"/>
    </location>
</feature>
<feature type="region of interest" description="2 X 10 AA repeats of V-E-P-T-P-T-P-V-V-E">
    <location>
        <begin position="310"/>
        <end position="339"/>
    </location>
</feature>
<feature type="region of interest" description="6 X 5 AA repeats of P-X-P-X-P">
    <location>
        <begin position="312"/>
        <end position="428"/>
    </location>
</feature>
<feature type="sequence conflict" description="In Ref. 3; AA sequence." evidence="2" ref="3">
    <original>P</original>
    <variation>R</variation>
    <location>
        <position position="288"/>
    </location>
</feature>